<proteinExistence type="inferred from homology"/>
<feature type="chain" id="PRO_0000184992" description="5-oxoprolinase subunit A 2">
    <location>
        <begin position="1"/>
        <end position="250"/>
    </location>
</feature>
<gene>
    <name evidence="1" type="primary">pxpA2</name>
    <name type="ordered locus">BB4725</name>
</gene>
<accession>Q7WEA9</accession>
<dbReference type="EC" id="3.5.2.9" evidence="1"/>
<dbReference type="EMBL" id="BX640451">
    <property type="protein sequence ID" value="CAE35088.1"/>
    <property type="molecule type" value="Genomic_DNA"/>
</dbReference>
<dbReference type="RefSeq" id="WP_010927180.1">
    <property type="nucleotide sequence ID" value="NC_002927.3"/>
</dbReference>
<dbReference type="SMR" id="Q7WEA9"/>
<dbReference type="KEGG" id="bbr:BB4725"/>
<dbReference type="eggNOG" id="COG1540">
    <property type="taxonomic scope" value="Bacteria"/>
</dbReference>
<dbReference type="HOGENOM" id="CLU_069535_0_0_4"/>
<dbReference type="Proteomes" id="UP000001027">
    <property type="component" value="Chromosome"/>
</dbReference>
<dbReference type="GO" id="GO:0017168">
    <property type="term" value="F:5-oxoprolinase (ATP-hydrolyzing) activity"/>
    <property type="evidence" value="ECO:0007669"/>
    <property type="project" value="UniProtKB-UniRule"/>
</dbReference>
<dbReference type="GO" id="GO:0005524">
    <property type="term" value="F:ATP binding"/>
    <property type="evidence" value="ECO:0007669"/>
    <property type="project" value="UniProtKB-UniRule"/>
</dbReference>
<dbReference type="GO" id="GO:0005975">
    <property type="term" value="P:carbohydrate metabolic process"/>
    <property type="evidence" value="ECO:0007669"/>
    <property type="project" value="InterPro"/>
</dbReference>
<dbReference type="CDD" id="cd10787">
    <property type="entry name" value="LamB_YcsF_like"/>
    <property type="match status" value="1"/>
</dbReference>
<dbReference type="Gene3D" id="3.20.20.370">
    <property type="entry name" value="Glycoside hydrolase/deacetylase"/>
    <property type="match status" value="1"/>
</dbReference>
<dbReference type="HAMAP" id="MF_00691">
    <property type="entry name" value="PxpA"/>
    <property type="match status" value="1"/>
</dbReference>
<dbReference type="InterPro" id="IPR011330">
    <property type="entry name" value="Glyco_hydro/deAcase_b/a-brl"/>
</dbReference>
<dbReference type="InterPro" id="IPR005501">
    <property type="entry name" value="LamB/YcsF/PxpA-like"/>
</dbReference>
<dbReference type="NCBIfam" id="NF003814">
    <property type="entry name" value="PRK05406.1-3"/>
    <property type="match status" value="1"/>
</dbReference>
<dbReference type="NCBIfam" id="NF003816">
    <property type="entry name" value="PRK05406.1-5"/>
    <property type="match status" value="1"/>
</dbReference>
<dbReference type="PANTHER" id="PTHR30292:SF0">
    <property type="entry name" value="5-OXOPROLINASE SUBUNIT A"/>
    <property type="match status" value="1"/>
</dbReference>
<dbReference type="PANTHER" id="PTHR30292">
    <property type="entry name" value="UNCHARACTERIZED PROTEIN YBGL-RELATED"/>
    <property type="match status" value="1"/>
</dbReference>
<dbReference type="Pfam" id="PF03746">
    <property type="entry name" value="LamB_YcsF"/>
    <property type="match status" value="1"/>
</dbReference>
<dbReference type="SUPFAM" id="SSF88713">
    <property type="entry name" value="Glycoside hydrolase/deacetylase"/>
    <property type="match status" value="1"/>
</dbReference>
<comment type="function">
    <text evidence="1">Catalyzes the cleavage of 5-oxoproline to form L-glutamate coupled to the hydrolysis of ATP to ADP and inorganic phosphate.</text>
</comment>
<comment type="catalytic activity">
    <reaction evidence="1">
        <text>5-oxo-L-proline + ATP + 2 H2O = L-glutamate + ADP + phosphate + H(+)</text>
        <dbReference type="Rhea" id="RHEA:10348"/>
        <dbReference type="ChEBI" id="CHEBI:15377"/>
        <dbReference type="ChEBI" id="CHEBI:15378"/>
        <dbReference type="ChEBI" id="CHEBI:29985"/>
        <dbReference type="ChEBI" id="CHEBI:30616"/>
        <dbReference type="ChEBI" id="CHEBI:43474"/>
        <dbReference type="ChEBI" id="CHEBI:58402"/>
        <dbReference type="ChEBI" id="CHEBI:456216"/>
        <dbReference type="EC" id="3.5.2.9"/>
    </reaction>
</comment>
<comment type="subunit">
    <text evidence="1">Forms a complex composed of PxpA, PxpB and PxpC.</text>
</comment>
<comment type="similarity">
    <text evidence="1">Belongs to the LamB/PxpA family.</text>
</comment>
<name>PXPA2_BORBR</name>
<sequence length="250" mass="26569">MPSIDINCDMGESFGPWVMGQDTELMPHITAANIACGFHAGDPDVMLATVRAAIAADVAIGAHPGLPDLQGFGRRVMAVTPDEVYALTVYQVGALQAIARSQGGRLHHVKTHGALYTLTARDPALADAVARAVADVDPALPIYVANAAIAQATRERGLRAVYEVYADRSYQDDGTLTPRSQPHAMIEDVDQAIAQVKRMVKEGVVRALSGKDVPITADTLCIHGDQPGAALFARRIRAALEAEGIEIRTV</sequence>
<keyword id="KW-0067">ATP-binding</keyword>
<keyword id="KW-0378">Hydrolase</keyword>
<keyword id="KW-0547">Nucleotide-binding</keyword>
<evidence type="ECO:0000255" key="1">
    <source>
        <dbReference type="HAMAP-Rule" id="MF_00691"/>
    </source>
</evidence>
<organism>
    <name type="scientific">Bordetella bronchiseptica (strain ATCC BAA-588 / NCTC 13252 / RB50)</name>
    <name type="common">Alcaligenes bronchisepticus</name>
    <dbReference type="NCBI Taxonomy" id="257310"/>
    <lineage>
        <taxon>Bacteria</taxon>
        <taxon>Pseudomonadati</taxon>
        <taxon>Pseudomonadota</taxon>
        <taxon>Betaproteobacteria</taxon>
        <taxon>Burkholderiales</taxon>
        <taxon>Alcaligenaceae</taxon>
        <taxon>Bordetella</taxon>
    </lineage>
</organism>
<reference key="1">
    <citation type="journal article" date="2003" name="Nat. Genet.">
        <title>Comparative analysis of the genome sequences of Bordetella pertussis, Bordetella parapertussis and Bordetella bronchiseptica.</title>
        <authorList>
            <person name="Parkhill J."/>
            <person name="Sebaihia M."/>
            <person name="Preston A."/>
            <person name="Murphy L.D."/>
            <person name="Thomson N.R."/>
            <person name="Harris D.E."/>
            <person name="Holden M.T.G."/>
            <person name="Churcher C.M."/>
            <person name="Bentley S.D."/>
            <person name="Mungall K.L."/>
            <person name="Cerdeno-Tarraga A.-M."/>
            <person name="Temple L."/>
            <person name="James K.D."/>
            <person name="Harris B."/>
            <person name="Quail M.A."/>
            <person name="Achtman M."/>
            <person name="Atkin R."/>
            <person name="Baker S."/>
            <person name="Basham D."/>
            <person name="Bason N."/>
            <person name="Cherevach I."/>
            <person name="Chillingworth T."/>
            <person name="Collins M."/>
            <person name="Cronin A."/>
            <person name="Davis P."/>
            <person name="Doggett J."/>
            <person name="Feltwell T."/>
            <person name="Goble A."/>
            <person name="Hamlin N."/>
            <person name="Hauser H."/>
            <person name="Holroyd S."/>
            <person name="Jagels K."/>
            <person name="Leather S."/>
            <person name="Moule S."/>
            <person name="Norberczak H."/>
            <person name="O'Neil S."/>
            <person name="Ormond D."/>
            <person name="Price C."/>
            <person name="Rabbinowitsch E."/>
            <person name="Rutter S."/>
            <person name="Sanders M."/>
            <person name="Saunders D."/>
            <person name="Seeger K."/>
            <person name="Sharp S."/>
            <person name="Simmonds M."/>
            <person name="Skelton J."/>
            <person name="Squares R."/>
            <person name="Squares S."/>
            <person name="Stevens K."/>
            <person name="Unwin L."/>
            <person name="Whitehead S."/>
            <person name="Barrell B.G."/>
            <person name="Maskell D.J."/>
        </authorList>
    </citation>
    <scope>NUCLEOTIDE SEQUENCE [LARGE SCALE GENOMIC DNA]</scope>
    <source>
        <strain>ATCC BAA-588 / NCTC 13252 / RB50</strain>
    </source>
</reference>
<protein>
    <recommendedName>
        <fullName evidence="1">5-oxoprolinase subunit A 2</fullName>
        <shortName evidence="1">5-OPase subunit A 2</shortName>
        <ecNumber evidence="1">3.5.2.9</ecNumber>
    </recommendedName>
    <alternativeName>
        <fullName evidence="1">5-oxoprolinase (ATP-hydrolyzing) subunit A 2</fullName>
    </alternativeName>
</protein>